<reference key="1">
    <citation type="journal article" date="2009" name="Genome Res.">
        <title>Newly introduced genomic prophage islands are critical determinants of in vivo competitiveness in the Liverpool epidemic strain of Pseudomonas aeruginosa.</title>
        <authorList>
            <person name="Winstanley C."/>
            <person name="Langille M.G.I."/>
            <person name="Fothergill J.L."/>
            <person name="Kukavica-Ibrulj I."/>
            <person name="Paradis-Bleau C."/>
            <person name="Sanschagrin F."/>
            <person name="Thomson N.R."/>
            <person name="Winsor G.L."/>
            <person name="Quail M.A."/>
            <person name="Lennard N."/>
            <person name="Bignell A."/>
            <person name="Clarke L."/>
            <person name="Seeger K."/>
            <person name="Saunders D."/>
            <person name="Harris D."/>
            <person name="Parkhill J."/>
            <person name="Hancock R.E.W."/>
            <person name="Brinkman F.S.L."/>
            <person name="Levesque R.C."/>
        </authorList>
    </citation>
    <scope>NUCLEOTIDE SEQUENCE [LARGE SCALE GENOMIC DNA]</scope>
    <source>
        <strain>LESB58</strain>
    </source>
</reference>
<protein>
    <recommendedName>
        <fullName evidence="1">1-deoxy-D-xylulose-5-phosphate synthase</fullName>
        <ecNumber evidence="1">2.2.1.7</ecNumber>
    </recommendedName>
    <alternativeName>
        <fullName evidence="1">1-deoxyxylulose-5-phosphate synthase</fullName>
        <shortName evidence="1">DXP synthase</shortName>
        <shortName evidence="1">DXPS</shortName>
    </alternativeName>
</protein>
<organism>
    <name type="scientific">Pseudomonas aeruginosa (strain LESB58)</name>
    <dbReference type="NCBI Taxonomy" id="557722"/>
    <lineage>
        <taxon>Bacteria</taxon>
        <taxon>Pseudomonadati</taxon>
        <taxon>Pseudomonadota</taxon>
        <taxon>Gammaproteobacteria</taxon>
        <taxon>Pseudomonadales</taxon>
        <taxon>Pseudomonadaceae</taxon>
        <taxon>Pseudomonas</taxon>
    </lineage>
</organism>
<comment type="function">
    <text evidence="1">Catalyzes the acyloin condensation reaction between C atoms 2 and 3 of pyruvate and glyceraldehyde 3-phosphate to yield 1-deoxy-D-xylulose-5-phosphate (DXP).</text>
</comment>
<comment type="catalytic activity">
    <reaction evidence="1">
        <text>D-glyceraldehyde 3-phosphate + pyruvate + H(+) = 1-deoxy-D-xylulose 5-phosphate + CO2</text>
        <dbReference type="Rhea" id="RHEA:12605"/>
        <dbReference type="ChEBI" id="CHEBI:15361"/>
        <dbReference type="ChEBI" id="CHEBI:15378"/>
        <dbReference type="ChEBI" id="CHEBI:16526"/>
        <dbReference type="ChEBI" id="CHEBI:57792"/>
        <dbReference type="ChEBI" id="CHEBI:59776"/>
        <dbReference type="EC" id="2.2.1.7"/>
    </reaction>
</comment>
<comment type="cofactor">
    <cofactor evidence="1">
        <name>Mg(2+)</name>
        <dbReference type="ChEBI" id="CHEBI:18420"/>
    </cofactor>
    <text evidence="1">Binds 1 Mg(2+) ion per subunit.</text>
</comment>
<comment type="cofactor">
    <cofactor evidence="1">
        <name>thiamine diphosphate</name>
        <dbReference type="ChEBI" id="CHEBI:58937"/>
    </cofactor>
    <text evidence="1">Binds 1 thiamine pyrophosphate per subunit.</text>
</comment>
<comment type="pathway">
    <text evidence="1">Metabolic intermediate biosynthesis; 1-deoxy-D-xylulose 5-phosphate biosynthesis; 1-deoxy-D-xylulose 5-phosphate from D-glyceraldehyde 3-phosphate and pyruvate: step 1/1.</text>
</comment>
<comment type="subunit">
    <text evidence="1">Homodimer.</text>
</comment>
<comment type="similarity">
    <text evidence="1">Belongs to the transketolase family. DXPS subfamily.</text>
</comment>
<proteinExistence type="evidence at protein level"/>
<dbReference type="EC" id="2.2.1.7" evidence="1"/>
<dbReference type="EMBL" id="FM209186">
    <property type="protein sequence ID" value="CAW25659.1"/>
    <property type="molecule type" value="Genomic_DNA"/>
</dbReference>
<dbReference type="RefSeq" id="WP_003102816.1">
    <property type="nucleotide sequence ID" value="NC_011770.1"/>
</dbReference>
<dbReference type="PDB" id="8A29">
    <property type="method" value="X-ray"/>
    <property type="resolution" value="2.10 A"/>
    <property type="chains" value="A/B/C/D/E/F=1-206, A/B/C/D/E/F=246-627"/>
</dbReference>
<dbReference type="PDB" id="8A45">
    <property type="method" value="X-ray"/>
    <property type="resolution" value="2.00 A"/>
    <property type="chains" value="A/B/C/D/E/F=1-206, A/B/C/D/E/F=247-627"/>
</dbReference>
<dbReference type="PDB" id="8A4D">
    <property type="method" value="X-ray"/>
    <property type="resolution" value="2.20 A"/>
    <property type="chains" value="A/B/C/D/E/F=1-206, A/B/C/D/E/F=246-627"/>
</dbReference>
<dbReference type="PDB" id="8A5K">
    <property type="method" value="X-ray"/>
    <property type="resolution" value="2.30 A"/>
    <property type="chains" value="A/B/C/D/E/F=1-206, A/B/C/D/E/F=246-627"/>
</dbReference>
<dbReference type="PDBsum" id="8A29"/>
<dbReference type="PDBsum" id="8A45"/>
<dbReference type="PDBsum" id="8A4D"/>
<dbReference type="PDBsum" id="8A5K"/>
<dbReference type="SMR" id="B7V7R4"/>
<dbReference type="KEGG" id="pag:PLES_09321"/>
<dbReference type="HOGENOM" id="CLU_009227_1_4_6"/>
<dbReference type="UniPathway" id="UPA00064">
    <property type="reaction ID" value="UER00091"/>
</dbReference>
<dbReference type="GO" id="GO:0005829">
    <property type="term" value="C:cytosol"/>
    <property type="evidence" value="ECO:0007669"/>
    <property type="project" value="TreeGrafter"/>
</dbReference>
<dbReference type="GO" id="GO:0008661">
    <property type="term" value="F:1-deoxy-D-xylulose-5-phosphate synthase activity"/>
    <property type="evidence" value="ECO:0007669"/>
    <property type="project" value="UniProtKB-UniRule"/>
</dbReference>
<dbReference type="GO" id="GO:0000287">
    <property type="term" value="F:magnesium ion binding"/>
    <property type="evidence" value="ECO:0007669"/>
    <property type="project" value="UniProtKB-UniRule"/>
</dbReference>
<dbReference type="GO" id="GO:0030976">
    <property type="term" value="F:thiamine pyrophosphate binding"/>
    <property type="evidence" value="ECO:0007669"/>
    <property type="project" value="UniProtKB-UniRule"/>
</dbReference>
<dbReference type="GO" id="GO:0052865">
    <property type="term" value="P:1-deoxy-D-xylulose 5-phosphate biosynthetic process"/>
    <property type="evidence" value="ECO:0007669"/>
    <property type="project" value="UniProtKB-UniPathway"/>
</dbReference>
<dbReference type="GO" id="GO:0019288">
    <property type="term" value="P:isopentenyl diphosphate biosynthetic process, methylerythritol 4-phosphate pathway"/>
    <property type="evidence" value="ECO:0007669"/>
    <property type="project" value="TreeGrafter"/>
</dbReference>
<dbReference type="GO" id="GO:0016114">
    <property type="term" value="P:terpenoid biosynthetic process"/>
    <property type="evidence" value="ECO:0007669"/>
    <property type="project" value="UniProtKB-UniRule"/>
</dbReference>
<dbReference type="GO" id="GO:0009228">
    <property type="term" value="P:thiamine biosynthetic process"/>
    <property type="evidence" value="ECO:0007669"/>
    <property type="project" value="UniProtKB-UniRule"/>
</dbReference>
<dbReference type="CDD" id="cd02007">
    <property type="entry name" value="TPP_DXS"/>
    <property type="match status" value="1"/>
</dbReference>
<dbReference type="CDD" id="cd07033">
    <property type="entry name" value="TPP_PYR_DXS_TK_like"/>
    <property type="match status" value="1"/>
</dbReference>
<dbReference type="FunFam" id="3.40.50.920:FF:000002">
    <property type="entry name" value="1-deoxy-D-xylulose-5-phosphate synthase"/>
    <property type="match status" value="1"/>
</dbReference>
<dbReference type="FunFam" id="3.40.50.970:FF:000005">
    <property type="entry name" value="1-deoxy-D-xylulose-5-phosphate synthase"/>
    <property type="match status" value="1"/>
</dbReference>
<dbReference type="Gene3D" id="3.40.50.920">
    <property type="match status" value="1"/>
</dbReference>
<dbReference type="Gene3D" id="3.40.50.970">
    <property type="match status" value="2"/>
</dbReference>
<dbReference type="HAMAP" id="MF_00315">
    <property type="entry name" value="DXP_synth"/>
    <property type="match status" value="1"/>
</dbReference>
<dbReference type="InterPro" id="IPR005477">
    <property type="entry name" value="Dxylulose-5-P_synthase"/>
</dbReference>
<dbReference type="InterPro" id="IPR029061">
    <property type="entry name" value="THDP-binding"/>
</dbReference>
<dbReference type="InterPro" id="IPR009014">
    <property type="entry name" value="Transketo_C/PFOR_II"/>
</dbReference>
<dbReference type="InterPro" id="IPR005475">
    <property type="entry name" value="Transketolase-like_Pyr-bd"/>
</dbReference>
<dbReference type="InterPro" id="IPR020826">
    <property type="entry name" value="Transketolase_BS"/>
</dbReference>
<dbReference type="InterPro" id="IPR033248">
    <property type="entry name" value="Transketolase_C"/>
</dbReference>
<dbReference type="NCBIfam" id="TIGR00204">
    <property type="entry name" value="dxs"/>
    <property type="match status" value="1"/>
</dbReference>
<dbReference type="NCBIfam" id="NF003933">
    <property type="entry name" value="PRK05444.2-2"/>
    <property type="match status" value="1"/>
</dbReference>
<dbReference type="PANTHER" id="PTHR43322">
    <property type="entry name" value="1-D-DEOXYXYLULOSE 5-PHOSPHATE SYNTHASE-RELATED"/>
    <property type="match status" value="1"/>
</dbReference>
<dbReference type="PANTHER" id="PTHR43322:SF5">
    <property type="entry name" value="1-DEOXY-D-XYLULOSE-5-PHOSPHATE SYNTHASE, CHLOROPLASTIC"/>
    <property type="match status" value="1"/>
</dbReference>
<dbReference type="Pfam" id="PF13292">
    <property type="entry name" value="DXP_synthase_N"/>
    <property type="match status" value="1"/>
</dbReference>
<dbReference type="Pfam" id="PF02779">
    <property type="entry name" value="Transket_pyr"/>
    <property type="match status" value="1"/>
</dbReference>
<dbReference type="Pfam" id="PF02780">
    <property type="entry name" value="Transketolase_C"/>
    <property type="match status" value="1"/>
</dbReference>
<dbReference type="SMART" id="SM00861">
    <property type="entry name" value="Transket_pyr"/>
    <property type="match status" value="1"/>
</dbReference>
<dbReference type="SUPFAM" id="SSF52518">
    <property type="entry name" value="Thiamin diphosphate-binding fold (THDP-binding)"/>
    <property type="match status" value="2"/>
</dbReference>
<dbReference type="SUPFAM" id="SSF52922">
    <property type="entry name" value="TK C-terminal domain-like"/>
    <property type="match status" value="1"/>
</dbReference>
<dbReference type="PROSITE" id="PS00802">
    <property type="entry name" value="TRANSKETOLASE_2"/>
    <property type="match status" value="1"/>
</dbReference>
<evidence type="ECO:0000255" key="1">
    <source>
        <dbReference type="HAMAP-Rule" id="MF_00315"/>
    </source>
</evidence>
<evidence type="ECO:0007829" key="2">
    <source>
        <dbReference type="PDB" id="8A45"/>
    </source>
</evidence>
<evidence type="ECO:0007829" key="3">
    <source>
        <dbReference type="PDB" id="8A4D"/>
    </source>
</evidence>
<feature type="chain" id="PRO_1000119553" description="1-deoxy-D-xylulose-5-phosphate synthase">
    <location>
        <begin position="1"/>
        <end position="627"/>
    </location>
</feature>
<feature type="binding site" evidence="1">
    <location>
        <position position="87"/>
    </location>
    <ligand>
        <name>thiamine diphosphate</name>
        <dbReference type="ChEBI" id="CHEBI:58937"/>
    </ligand>
</feature>
<feature type="binding site" evidence="1">
    <location>
        <begin position="128"/>
        <end position="130"/>
    </location>
    <ligand>
        <name>thiamine diphosphate</name>
        <dbReference type="ChEBI" id="CHEBI:58937"/>
    </ligand>
</feature>
<feature type="binding site" evidence="1">
    <location>
        <position position="159"/>
    </location>
    <ligand>
        <name>Mg(2+)</name>
        <dbReference type="ChEBI" id="CHEBI:18420"/>
    </ligand>
</feature>
<feature type="binding site" evidence="1">
    <location>
        <begin position="160"/>
        <end position="161"/>
    </location>
    <ligand>
        <name>thiamine diphosphate</name>
        <dbReference type="ChEBI" id="CHEBI:58937"/>
    </ligand>
</feature>
<feature type="binding site" evidence="1">
    <location>
        <position position="188"/>
    </location>
    <ligand>
        <name>Mg(2+)</name>
        <dbReference type="ChEBI" id="CHEBI:18420"/>
    </ligand>
</feature>
<feature type="binding site" evidence="1">
    <location>
        <position position="188"/>
    </location>
    <ligand>
        <name>thiamine diphosphate</name>
        <dbReference type="ChEBI" id="CHEBI:58937"/>
    </ligand>
</feature>
<feature type="binding site" evidence="1">
    <location>
        <position position="295"/>
    </location>
    <ligand>
        <name>thiamine diphosphate</name>
        <dbReference type="ChEBI" id="CHEBI:58937"/>
    </ligand>
</feature>
<feature type="binding site" evidence="1">
    <location>
        <position position="375"/>
    </location>
    <ligand>
        <name>thiamine diphosphate</name>
        <dbReference type="ChEBI" id="CHEBI:58937"/>
    </ligand>
</feature>
<feature type="strand" evidence="3">
    <location>
        <begin position="5"/>
        <end position="7"/>
    </location>
</feature>
<feature type="helix" evidence="2">
    <location>
        <begin position="16"/>
        <end position="19"/>
    </location>
</feature>
<feature type="helix" evidence="2">
    <location>
        <begin position="24"/>
        <end position="29"/>
    </location>
</feature>
<feature type="helix" evidence="2">
    <location>
        <begin position="32"/>
        <end position="53"/>
    </location>
</feature>
<feature type="helix" evidence="2">
    <location>
        <begin position="58"/>
        <end position="62"/>
    </location>
</feature>
<feature type="helix" evidence="2">
    <location>
        <begin position="64"/>
        <end position="73"/>
    </location>
</feature>
<feature type="turn" evidence="2">
    <location>
        <begin position="76"/>
        <end position="78"/>
    </location>
</feature>
<feature type="strand" evidence="2">
    <location>
        <begin position="79"/>
        <end position="86"/>
    </location>
</feature>
<feature type="helix" evidence="2">
    <location>
        <begin position="90"/>
        <end position="94"/>
    </location>
</feature>
<feature type="turn" evidence="2">
    <location>
        <begin position="95"/>
        <end position="98"/>
    </location>
</feature>
<feature type="helix" evidence="2">
    <location>
        <begin position="99"/>
        <end position="104"/>
    </location>
</feature>
<feature type="helix" evidence="2">
    <location>
        <begin position="117"/>
        <end position="119"/>
    </location>
</feature>
<feature type="strand" evidence="2">
    <location>
        <begin position="128"/>
        <end position="131"/>
    </location>
</feature>
<feature type="helix" evidence="2">
    <location>
        <begin position="133"/>
        <end position="146"/>
    </location>
</feature>
<feature type="strand" evidence="2">
    <location>
        <begin position="153"/>
        <end position="158"/>
    </location>
</feature>
<feature type="helix" evidence="2">
    <location>
        <begin position="161"/>
        <end position="163"/>
    </location>
</feature>
<feature type="helix" evidence="2">
    <location>
        <begin position="165"/>
        <end position="177"/>
    </location>
</feature>
<feature type="strand" evidence="2">
    <location>
        <begin position="181"/>
        <end position="187"/>
    </location>
</feature>
<feature type="strand" evidence="2">
    <location>
        <begin position="189"/>
        <end position="194"/>
    </location>
</feature>
<feature type="helix" evidence="2">
    <location>
        <begin position="198"/>
        <end position="202"/>
    </location>
</feature>
<feature type="helix" evidence="2">
    <location>
        <begin position="249"/>
        <end position="252"/>
    </location>
</feature>
<feature type="strand" evidence="2">
    <location>
        <begin position="256"/>
        <end position="262"/>
    </location>
</feature>
<feature type="helix" evidence="2">
    <location>
        <begin position="266"/>
        <end position="277"/>
    </location>
</feature>
<feature type="strand" evidence="2">
    <location>
        <begin position="281"/>
        <end position="288"/>
    </location>
</feature>
<feature type="turn" evidence="2">
    <location>
        <begin position="291"/>
        <end position="294"/>
    </location>
</feature>
<feature type="helix" evidence="2">
    <location>
        <begin position="296"/>
        <end position="300"/>
    </location>
</feature>
<feature type="turn" evidence="2">
    <location>
        <begin position="302"/>
        <end position="305"/>
    </location>
</feature>
<feature type="strand" evidence="2">
    <location>
        <begin position="306"/>
        <end position="308"/>
    </location>
</feature>
<feature type="helix" evidence="2">
    <location>
        <begin position="326"/>
        <end position="340"/>
    </location>
</feature>
<feature type="strand" evidence="2">
    <location>
        <begin position="344"/>
        <end position="350"/>
    </location>
</feature>
<feature type="helix" evidence="2">
    <location>
        <begin position="352"/>
        <end position="355"/>
    </location>
</feature>
<feature type="helix" evidence="2">
    <location>
        <begin position="358"/>
        <end position="363"/>
    </location>
</feature>
<feature type="helix" evidence="2">
    <location>
        <begin position="365"/>
        <end position="367"/>
    </location>
</feature>
<feature type="strand" evidence="2">
    <location>
        <begin position="368"/>
        <end position="370"/>
    </location>
</feature>
<feature type="helix" evidence="2">
    <location>
        <begin position="375"/>
        <end position="387"/>
    </location>
</feature>
<feature type="strand" evidence="2">
    <location>
        <begin position="391"/>
        <end position="397"/>
    </location>
</feature>
<feature type="helix" evidence="2">
    <location>
        <begin position="398"/>
        <end position="401"/>
    </location>
</feature>
<feature type="helix" evidence="2">
    <location>
        <begin position="402"/>
        <end position="404"/>
    </location>
</feature>
<feature type="helix" evidence="2">
    <location>
        <begin position="405"/>
        <end position="410"/>
    </location>
</feature>
<feature type="turn" evidence="2">
    <location>
        <begin position="411"/>
        <end position="416"/>
    </location>
</feature>
<feature type="strand" evidence="2">
    <location>
        <begin position="420"/>
        <end position="425"/>
    </location>
</feature>
<feature type="helix" evidence="2">
    <location>
        <begin position="434"/>
        <end position="436"/>
    </location>
</feature>
<feature type="helix" evidence="2">
    <location>
        <begin position="441"/>
        <end position="446"/>
    </location>
</feature>
<feature type="strand" evidence="2">
    <location>
        <begin position="452"/>
        <end position="454"/>
    </location>
</feature>
<feature type="helix" evidence="2">
    <location>
        <begin position="459"/>
        <end position="471"/>
    </location>
</feature>
<feature type="strand" evidence="2">
    <location>
        <begin position="472"/>
        <end position="474"/>
    </location>
</feature>
<feature type="strand" evidence="2">
    <location>
        <begin position="476"/>
        <end position="479"/>
    </location>
</feature>
<feature type="strand" evidence="2">
    <location>
        <begin position="482"/>
        <end position="484"/>
    </location>
</feature>
<feature type="strand" evidence="2">
    <location>
        <begin position="503"/>
        <end position="506"/>
    </location>
</feature>
<feature type="strand" evidence="2">
    <location>
        <begin position="509"/>
        <end position="517"/>
    </location>
</feature>
<feature type="helix" evidence="2">
    <location>
        <begin position="520"/>
        <end position="530"/>
    </location>
</feature>
<feature type="strand" evidence="2">
    <location>
        <begin position="533"/>
        <end position="536"/>
    </location>
</feature>
<feature type="strand" evidence="2">
    <location>
        <begin position="539"/>
        <end position="542"/>
    </location>
</feature>
<feature type="helix" evidence="2">
    <location>
        <begin position="545"/>
        <end position="554"/>
    </location>
</feature>
<feature type="strand" evidence="2">
    <location>
        <begin position="556"/>
        <end position="566"/>
    </location>
</feature>
<feature type="helix" evidence="2">
    <location>
        <begin position="570"/>
        <end position="580"/>
    </location>
</feature>
<feature type="strand" evidence="2">
    <location>
        <begin position="587"/>
        <end position="592"/>
    </location>
</feature>
<feature type="helix" evidence="2">
    <location>
        <begin position="602"/>
        <end position="608"/>
    </location>
</feature>
<feature type="helix" evidence="2">
    <location>
        <begin position="613"/>
        <end position="623"/>
    </location>
</feature>
<keyword id="KW-0002">3D-structure</keyword>
<keyword id="KW-0414">Isoprene biosynthesis</keyword>
<keyword id="KW-0460">Magnesium</keyword>
<keyword id="KW-0479">Metal-binding</keyword>
<keyword id="KW-0784">Thiamine biosynthesis</keyword>
<keyword id="KW-0786">Thiamine pyrophosphate</keyword>
<keyword id="KW-0808">Transferase</keyword>
<gene>
    <name evidence="1" type="primary">dxs</name>
    <name type="ordered locus">PLES_09321</name>
</gene>
<accession>B7V7R4</accession>
<name>DXS_PSEA8</name>
<sequence>MPKTLHEIPRERPATPLLDRASSPAELRRLGEADLETLADELRQYLLYTVGQTGGHFGAGLGVVELTIALHYVFDTPDDRLVWDVGHQAYPHKILTERRELMGTLRQKNGLAAFPRRAESEYDTFGVGHSSTSISAALGMAIAARLQGKERKSVAVIGDGALTAGMAFEALNHASEVDADMLVILNDNDMSISHNVGGLSNYLAKILSSRTYSSMREGSKKVLSRLPGAWEIARRTEEYAKGMLVPGTLFEELGWNYIGPIDGHDLPTLVATLRNMRDMKGPQFLHVVTKKGKGFAPAELDPIGYHAITKLEAPGSAPKKTGGPKYSSVFGQWLCDMAAQDARLLGITPAMKEGSDLVAFSERYPERYFDVAIAEQHAVTLAAGMACEGMKPVVAIYSTFLQRAYDQLIHDVAVQHLDVLFAIDRAGLVGEDGPTHAGSFDISYLRCIPGMLVMTPSDEDELRKLLTTGYLFDGPAAVRYPRGSGPNHPIDPDLQPVEIGKGVVRRRGGRVALLVFGVQLAEAMKVAESLDATVVDMRFVKPLDEALVRELAGSHELLVTIEENAVMGGAGSAVGEFLASEGLEVPLLQLGLPDYYVEHAKPSEMLAECGLDAAGIEKAVRQRLDRQ</sequence>